<evidence type="ECO:0000256" key="1">
    <source>
        <dbReference type="SAM" id="MobiDB-lite"/>
    </source>
</evidence>
<evidence type="ECO:0000269" key="2">
    <source>
    </source>
</evidence>
<evidence type="ECO:0000303" key="3">
    <source>
    </source>
</evidence>
<evidence type="ECO:0000305" key="4"/>
<protein>
    <recommendedName>
        <fullName>Pregnancy-associated protein bPAP</fullName>
    </recommendedName>
</protein>
<feature type="chain" id="PRO_0000064975" description="Pregnancy-associated protein bPAP">
    <location>
        <begin position="1"/>
        <end position="100" status="greater than"/>
    </location>
</feature>
<feature type="region of interest" description="Disordered" evidence="1">
    <location>
        <begin position="1"/>
        <end position="40"/>
    </location>
</feature>
<feature type="compositionally biased region" description="Low complexity" evidence="1">
    <location>
        <begin position="13"/>
        <end position="29"/>
    </location>
</feature>
<feature type="non-consecutive residues" evidence="3">
    <location>
        <begin position="18"/>
        <end position="19"/>
    </location>
</feature>
<feature type="non-consecutive residues" evidence="3">
    <location>
        <begin position="42"/>
        <end position="43"/>
    </location>
</feature>
<feature type="non-consecutive residues" evidence="3">
    <location>
        <begin position="50"/>
        <end position="51"/>
    </location>
</feature>
<feature type="non-consecutive residues" evidence="3">
    <location>
        <begin position="56"/>
        <end position="57"/>
    </location>
</feature>
<feature type="non-consecutive residues" evidence="3">
    <location>
        <begin position="71"/>
        <end position="72"/>
    </location>
</feature>
<feature type="non-consecutive residues" evidence="3">
    <location>
        <begin position="82"/>
        <end position="83"/>
    </location>
</feature>
<feature type="non-consecutive residues" evidence="3">
    <location>
        <begin position="87"/>
        <end position="88"/>
    </location>
</feature>
<feature type="non-consecutive residues" evidence="3">
    <location>
        <begin position="96"/>
        <end position="97"/>
    </location>
</feature>
<feature type="non-terminal residue" evidence="3">
    <location>
        <position position="100"/>
    </location>
</feature>
<keyword id="KW-0903">Direct protein sequencing</keyword>
<keyword id="KW-1185">Reference proteome</keyword>
<sequence length="100" mass="10326">DSELAGPRGARGPHGLSGPHGLSGLXGPXGYTGPIGMXGLTGLRREESEKVWLESKDGQELELVSSGSAQEELELVSSGSAQVSFASYLGASQPLPSELW</sequence>
<organism>
    <name type="scientific">Bos taurus</name>
    <name type="common">Bovine</name>
    <dbReference type="NCBI Taxonomy" id="9913"/>
    <lineage>
        <taxon>Eukaryota</taxon>
        <taxon>Metazoa</taxon>
        <taxon>Chordata</taxon>
        <taxon>Craniata</taxon>
        <taxon>Vertebrata</taxon>
        <taxon>Euteleostomi</taxon>
        <taxon>Mammalia</taxon>
        <taxon>Eutheria</taxon>
        <taxon>Laurasiatheria</taxon>
        <taxon>Artiodactyla</taxon>
        <taxon>Ruminantia</taxon>
        <taxon>Pecora</taxon>
        <taxon>Bovidae</taxon>
        <taxon>Bovinae</taxon>
        <taxon>Bos</taxon>
    </lineage>
</organism>
<name>BPAP_BOVIN</name>
<dbReference type="InParanoid" id="P84291"/>
<dbReference type="Proteomes" id="UP000009136">
    <property type="component" value="Unplaced"/>
</dbReference>
<accession>P84291</accession>
<reference evidence="4" key="1">
    <citation type="journal article" date="2003" name="Proteomics">
        <title>Characterization of a bovine pregnancy-associated protein using two-dimensional gel electrophoresis, N-terminal sequencing and mass spectrometry.</title>
        <authorList>
            <person name="Pyo J."/>
            <person name="Hwang S.-I."/>
            <person name="Oh J."/>
            <person name="Lee S.-J."/>
            <person name="Kang S.-C."/>
            <person name="Kim J.-S."/>
            <person name="Lim J."/>
        </authorList>
    </citation>
    <scope>PROTEIN SEQUENCE</scope>
    <scope>TISSUE SPECIFICITY</scope>
    <scope>IDENTIFICATION BY MASS SPECTROMETRY</scope>
    <source>
        <tissue evidence="2">Urine</tissue>
    </source>
</reference>
<proteinExistence type="evidence at protein level"/>
<comment type="tissue specificity">
    <text evidence="2">Detected at high levels in the urine of pregnant females (at protein level) and at far lower levels in the urine of nonpregnant females.</text>
</comment>
<comment type="caution">
    <text evidence="4">The order of the peptides shown is unknown.</text>
</comment>